<evidence type="ECO:0000269" key="1">
    <source>
    </source>
</evidence>
<evidence type="ECO:0000303" key="2">
    <source>
    </source>
</evidence>
<evidence type="ECO:0000305" key="3"/>
<evidence type="ECO:0000305" key="4">
    <source>
    </source>
</evidence>
<evidence type="ECO:0000312" key="5">
    <source>
        <dbReference type="HGNC" id="HGNC:34221"/>
    </source>
</evidence>
<gene>
    <name evidence="5" type="primary">SCYGR10</name>
    <name evidence="2" type="synonym">KRTAP28p2</name>
</gene>
<feature type="chain" id="PRO_0000445149" description="Small cysteine and glycine repeat-containing protein 10">
    <location>
        <begin position="1"/>
        <end position="105"/>
    </location>
</feature>
<feature type="region of interest" description="10 X 2 AA repeats of CG" evidence="3">
    <location>
        <begin position="4"/>
        <end position="41"/>
    </location>
</feature>
<feature type="sequence variant" id="VAR_088902" evidence="1">
    <location>
        <begin position="48"/>
        <end position="105"/>
    </location>
</feature>
<keyword id="KW-0416">Keratin</keyword>
<keyword id="KW-1185">Reference proteome</keyword>
<keyword id="KW-0677">Repeat</keyword>
<comment type="function">
    <text evidence="3">In the hair cortex, hair keratin intermediate filaments are embedded in an interfilamentous matrix, consisting of hair keratin-associated proteins (KRTAP), which are essential for the formation of a rigid and resistant hair shaft through their extensive disulfide bond cross-linking with abundant cysteine residues of hair keratins. The matrix proteins include the high-sulfur and high-glycine-tyrosine keratins.</text>
</comment>
<comment type="polymorphism">
    <text evidence="3">SCYGR10 exists as both a pseudogene and a protein-coding gene in the human population. The potentially functional sequence displayed here with the variant p.Ter48Tyr has a frequency below 5% in the human population according to the Genome Aggregation Database (gnomAD v4.0.0.0).</text>
</comment>
<comment type="miscellaneous">
    <text evidence="2">Human have a similar number of genes as other primates despite the relative hairlessness of humans.</text>
</comment>
<comment type="similarity">
    <text evidence="4">Belongs to the KRTAP type 28 family.</text>
</comment>
<comment type="caution">
    <text evidence="1">SCYGR10 exists as both a pseudogene and a protein-coding gene in the human population. The sequence presented here represents the functional copy of the gene, deviating from the translation of the reference genome assembly (GRCh38/hg38). The reference genome exhibits a nonsense variant introducing a stop codon at position 48.</text>
</comment>
<dbReference type="EMBL" id="AC064853">
    <property type="status" value="NOT_ANNOTATED_CDS"/>
    <property type="molecule type" value="Genomic_DNA"/>
</dbReference>
<dbReference type="BioMuta" id="ENSG00000284622"/>
<dbReference type="PeptideAtlas" id="A0A286YEX9"/>
<dbReference type="Ensembl" id="ENST00000641246.2">
    <property type="protein sequence ID" value="ENSP00000493099.2"/>
    <property type="gene ID" value="ENSG00000284622.2"/>
</dbReference>
<dbReference type="AGR" id="HGNC:34221"/>
<dbReference type="GeneCards" id="SCYGR10"/>
<dbReference type="HGNC" id="HGNC:34221">
    <property type="gene designation" value="SCYGR10"/>
</dbReference>
<dbReference type="HPA" id="ENSG00000284622">
    <property type="expression patterns" value="Not detected"/>
</dbReference>
<dbReference type="neXtProt" id="NX_A0A286YEX9"/>
<dbReference type="InParanoid" id="A0A286YEX9"/>
<dbReference type="PAN-GO" id="A0A286YEX9">
    <property type="GO annotations" value="0 GO annotations based on evolutionary models"/>
</dbReference>
<dbReference type="Pharos" id="A0A286YEX9">
    <property type="development level" value="Tdark"/>
</dbReference>
<dbReference type="PRO" id="PR:A0A286YEX9"/>
<dbReference type="Proteomes" id="UP000005640">
    <property type="component" value="Chromosome 2"/>
</dbReference>
<dbReference type="Bgee" id="ENSG00000284622">
    <property type="expression patterns" value="Expressed in primordial germ cell in gonad and 64 other cell types or tissues"/>
</dbReference>
<dbReference type="GO" id="GO:0005882">
    <property type="term" value="C:intermediate filament"/>
    <property type="evidence" value="ECO:0007669"/>
    <property type="project" value="UniProtKB-KW"/>
</dbReference>
<reference key="1">
    <citation type="journal article" date="2005" name="Nature">
        <title>Generation and annotation of the DNA sequences of human chromosomes 2 and 4.</title>
        <authorList>
            <person name="Hillier L.W."/>
            <person name="Graves T.A."/>
            <person name="Fulton R.S."/>
            <person name="Fulton L.A."/>
            <person name="Pepin K.H."/>
            <person name="Minx P."/>
            <person name="Wagner-McPherson C."/>
            <person name="Layman D."/>
            <person name="Wylie K."/>
            <person name="Sekhon M."/>
            <person name="Becker M.C."/>
            <person name="Fewell G.A."/>
            <person name="Delehaunty K.D."/>
            <person name="Miner T.L."/>
            <person name="Nash W.E."/>
            <person name="Kremitzki C."/>
            <person name="Oddy L."/>
            <person name="Du H."/>
            <person name="Sun H."/>
            <person name="Bradshaw-Cordum H."/>
            <person name="Ali J."/>
            <person name="Carter J."/>
            <person name="Cordes M."/>
            <person name="Harris A."/>
            <person name="Isak A."/>
            <person name="van Brunt A."/>
            <person name="Nguyen C."/>
            <person name="Du F."/>
            <person name="Courtney L."/>
            <person name="Kalicki J."/>
            <person name="Ozersky P."/>
            <person name="Abbott S."/>
            <person name="Armstrong J."/>
            <person name="Belter E.A."/>
            <person name="Caruso L."/>
            <person name="Cedroni M."/>
            <person name="Cotton M."/>
            <person name="Davidson T."/>
            <person name="Desai A."/>
            <person name="Elliott G."/>
            <person name="Erb T."/>
            <person name="Fronick C."/>
            <person name="Gaige T."/>
            <person name="Haakenson W."/>
            <person name="Haglund K."/>
            <person name="Holmes A."/>
            <person name="Harkins R."/>
            <person name="Kim K."/>
            <person name="Kruchowski S.S."/>
            <person name="Strong C.M."/>
            <person name="Grewal N."/>
            <person name="Goyea E."/>
            <person name="Hou S."/>
            <person name="Levy A."/>
            <person name="Martinka S."/>
            <person name="Mead K."/>
            <person name="McLellan M.D."/>
            <person name="Meyer R."/>
            <person name="Randall-Maher J."/>
            <person name="Tomlinson C."/>
            <person name="Dauphin-Kohlberg S."/>
            <person name="Kozlowicz-Reilly A."/>
            <person name="Shah N."/>
            <person name="Swearengen-Shahid S."/>
            <person name="Snider J."/>
            <person name="Strong J.T."/>
            <person name="Thompson J."/>
            <person name="Yoakum M."/>
            <person name="Leonard S."/>
            <person name="Pearman C."/>
            <person name="Trani L."/>
            <person name="Radionenko M."/>
            <person name="Waligorski J.E."/>
            <person name="Wang C."/>
            <person name="Rock S.M."/>
            <person name="Tin-Wollam A.-M."/>
            <person name="Maupin R."/>
            <person name="Latreille P."/>
            <person name="Wendl M.C."/>
            <person name="Yang S.-P."/>
            <person name="Pohl C."/>
            <person name="Wallis J.W."/>
            <person name="Spieth J."/>
            <person name="Bieri T.A."/>
            <person name="Berkowicz N."/>
            <person name="Nelson J.O."/>
            <person name="Osborne J."/>
            <person name="Ding L."/>
            <person name="Meyer R."/>
            <person name="Sabo A."/>
            <person name="Shotland Y."/>
            <person name="Sinha P."/>
            <person name="Wohldmann P.E."/>
            <person name="Cook L.L."/>
            <person name="Hickenbotham M.T."/>
            <person name="Eldred J."/>
            <person name="Williams D."/>
            <person name="Jones T.A."/>
            <person name="She X."/>
            <person name="Ciccarelli F.D."/>
            <person name="Izaurralde E."/>
            <person name="Taylor J."/>
            <person name="Schmutz J."/>
            <person name="Myers R.M."/>
            <person name="Cox D.R."/>
            <person name="Huang X."/>
            <person name="McPherson J.D."/>
            <person name="Mardis E.R."/>
            <person name="Clifton S.W."/>
            <person name="Warren W.C."/>
            <person name="Chinwalla A.T."/>
            <person name="Eddy S.R."/>
            <person name="Marra M.A."/>
            <person name="Ovcharenko I."/>
            <person name="Furey T.S."/>
            <person name="Miller W."/>
            <person name="Eichler E.E."/>
            <person name="Bork P."/>
            <person name="Suyama M."/>
            <person name="Torrents D."/>
            <person name="Waterston R.H."/>
            <person name="Wilson R.K."/>
        </authorList>
    </citation>
    <scope>NUCLEOTIDE SEQUENCE [LARGE SCALE GENOMIC DNA]</scope>
    <scope>VARIANT 48-TYR--CYS-105 DEL</scope>
</reference>
<reference key="2">
    <citation type="journal article" date="2008" name="BMC Evol. Biol.">
        <title>Molecular evolution of the keratin associated protein gene family in mammals, role in the evolution of mammalian hair.</title>
        <authorList>
            <person name="Wu D.D."/>
            <person name="Irwin D.M."/>
            <person name="Zhang Y.P."/>
        </authorList>
    </citation>
    <scope>FAMILY CHARACTERIZATION</scope>
</reference>
<sequence>MGCCGCGGCGGRCSGGCGGGCGGGCGGGCGGGCGGCGGGCGSYTTCRYYRVGCCSSCCPCCRGCCGGCCSTPVICCCRRTCRSCGCGCGKSCCQQKCCCQKQCCC</sequence>
<proteinExistence type="evidence at protein level"/>
<organism>
    <name type="scientific">Homo sapiens</name>
    <name type="common">Human</name>
    <dbReference type="NCBI Taxonomy" id="9606"/>
    <lineage>
        <taxon>Eukaryota</taxon>
        <taxon>Metazoa</taxon>
        <taxon>Chordata</taxon>
        <taxon>Craniata</taxon>
        <taxon>Vertebrata</taxon>
        <taxon>Euteleostomi</taxon>
        <taxon>Mammalia</taxon>
        <taxon>Eutheria</taxon>
        <taxon>Euarchontoglires</taxon>
        <taxon>Primates</taxon>
        <taxon>Haplorrhini</taxon>
        <taxon>Catarrhini</taxon>
        <taxon>Hominidae</taxon>
        <taxon>Homo</taxon>
    </lineage>
</organism>
<accession>A0A286YEX9</accession>
<name>SCGRX_HUMAN</name>
<protein>
    <recommendedName>
        <fullName evidence="3">Small cysteine and glycine repeat-containing protein 10</fullName>
    </recommendedName>
    <alternativeName>
        <fullName evidence="2">Keratin-associated protein 28 family pseudogene 2</fullName>
    </alternativeName>
</protein>